<proteinExistence type="inferred from homology"/>
<sequence>MKTLTRKLSRTAITLVLVILAFIAIFRAWVYYTESPWTRDARFSADVVAIAPDVAGLITHVNVHDNQLVKKDQVLFTIDQPRYQKALAEAEADVAYYQVLAQEKRQEAGRRNRLGVQAMSREEIDQANNVLQTVLHQLAKAQATRDLAKLDLERTVIRAPADGWVTNLNVYAGEFITRGSTAVALVKKNSFYVQAYMEETKLEGVRPGYRAEITPLGSNRVLKGTVDSVAAGVTNASSTSDAKGMATIDSNLEWVRLAQRVPVRIRLDEQQGNLWPAGTTATVVITGKQDRDASQDSFFRKLAHRLREFG</sequence>
<accession>B5FIU3</accession>
<dbReference type="EMBL" id="CP001144">
    <property type="protein sequence ID" value="ACH76739.1"/>
    <property type="molecule type" value="Genomic_DNA"/>
</dbReference>
<dbReference type="RefSeq" id="WP_000855134.1">
    <property type="nucleotide sequence ID" value="NC_011205.1"/>
</dbReference>
<dbReference type="SMR" id="B5FIU3"/>
<dbReference type="KEGG" id="sed:SeD_A3725"/>
<dbReference type="HOGENOM" id="CLU_018816_15_2_6"/>
<dbReference type="Proteomes" id="UP000008322">
    <property type="component" value="Chromosome"/>
</dbReference>
<dbReference type="GO" id="GO:0005886">
    <property type="term" value="C:plasma membrane"/>
    <property type="evidence" value="ECO:0007669"/>
    <property type="project" value="UniProtKB-SubCell"/>
</dbReference>
<dbReference type="GO" id="GO:0022857">
    <property type="term" value="F:transmembrane transporter activity"/>
    <property type="evidence" value="ECO:0007669"/>
    <property type="project" value="UniProtKB-UniRule"/>
</dbReference>
<dbReference type="FunFam" id="2.40.30.170:FF:000002">
    <property type="entry name" value="p-hydroxybenzoic acid efflux pump subunit AaeA"/>
    <property type="match status" value="1"/>
</dbReference>
<dbReference type="FunFam" id="2.40.50.100:FF:000018">
    <property type="entry name" value="p-hydroxybenzoic acid efflux pump subunit AaeA"/>
    <property type="match status" value="1"/>
</dbReference>
<dbReference type="Gene3D" id="2.40.30.170">
    <property type="match status" value="1"/>
</dbReference>
<dbReference type="Gene3D" id="2.40.50.100">
    <property type="match status" value="1"/>
</dbReference>
<dbReference type="HAMAP" id="MF_01544">
    <property type="entry name" value="AaeA"/>
    <property type="match status" value="1"/>
</dbReference>
<dbReference type="InterPro" id="IPR043602">
    <property type="entry name" value="CusB-like_dom_1"/>
</dbReference>
<dbReference type="InterPro" id="IPR032317">
    <property type="entry name" value="CusB_D23"/>
</dbReference>
<dbReference type="InterPro" id="IPR050393">
    <property type="entry name" value="MFP_Efflux_Pump"/>
</dbReference>
<dbReference type="InterPro" id="IPR022871">
    <property type="entry name" value="PHBA_efflux_pump_AaeA"/>
</dbReference>
<dbReference type="InterPro" id="IPR006143">
    <property type="entry name" value="RND_pump_MFP"/>
</dbReference>
<dbReference type="NCBIfam" id="NF007850">
    <property type="entry name" value="PRK10559.1"/>
    <property type="match status" value="1"/>
</dbReference>
<dbReference type="NCBIfam" id="TIGR01730">
    <property type="entry name" value="RND_mfp"/>
    <property type="match status" value="1"/>
</dbReference>
<dbReference type="PANTHER" id="PTHR30367:SF12">
    <property type="entry name" value="P-HYDROXYBENZOIC ACID EFFLUX PUMP SUBUNIT AAEA"/>
    <property type="match status" value="1"/>
</dbReference>
<dbReference type="PANTHER" id="PTHR30367">
    <property type="entry name" value="P-HYDROXYBENZOIC ACID EFFLUX PUMP SUBUNIT AAEA-RELATED"/>
    <property type="match status" value="1"/>
</dbReference>
<dbReference type="Pfam" id="PF00529">
    <property type="entry name" value="CusB_dom_1"/>
    <property type="match status" value="1"/>
</dbReference>
<dbReference type="Pfam" id="PF16576">
    <property type="entry name" value="HlyD_D23"/>
    <property type="match status" value="1"/>
</dbReference>
<dbReference type="SUPFAM" id="SSF111369">
    <property type="entry name" value="HlyD-like secretion proteins"/>
    <property type="match status" value="1"/>
</dbReference>
<comment type="function">
    <text evidence="1">Forms an efflux pump with AaeB.</text>
</comment>
<comment type="subcellular location">
    <subcellularLocation>
        <location evidence="1">Cell inner membrane</location>
        <topology evidence="1">Single-pass membrane protein</topology>
    </subcellularLocation>
</comment>
<comment type="similarity">
    <text evidence="1">Belongs to the membrane fusion protein (MFP) (TC 8.A.1) family.</text>
</comment>
<name>AAEA_SALDC</name>
<keyword id="KW-0997">Cell inner membrane</keyword>
<keyword id="KW-1003">Cell membrane</keyword>
<keyword id="KW-0472">Membrane</keyword>
<keyword id="KW-0812">Transmembrane</keyword>
<keyword id="KW-1133">Transmembrane helix</keyword>
<keyword id="KW-0813">Transport</keyword>
<protein>
    <recommendedName>
        <fullName evidence="1">p-hydroxybenzoic acid efflux pump subunit AaeA</fullName>
        <shortName evidence="1">pHBA efflux pump protein A</shortName>
    </recommendedName>
</protein>
<feature type="chain" id="PRO_1000146723" description="p-hydroxybenzoic acid efflux pump subunit AaeA">
    <location>
        <begin position="1"/>
        <end position="310"/>
    </location>
</feature>
<feature type="transmembrane region" description="Helical" evidence="1">
    <location>
        <begin position="12"/>
        <end position="32"/>
    </location>
</feature>
<reference key="1">
    <citation type="journal article" date="2011" name="J. Bacteriol.">
        <title>Comparative genomics of 28 Salmonella enterica isolates: evidence for CRISPR-mediated adaptive sublineage evolution.</title>
        <authorList>
            <person name="Fricke W.F."/>
            <person name="Mammel M.K."/>
            <person name="McDermott P.F."/>
            <person name="Tartera C."/>
            <person name="White D.G."/>
            <person name="Leclerc J.E."/>
            <person name="Ravel J."/>
            <person name="Cebula T.A."/>
        </authorList>
    </citation>
    <scope>NUCLEOTIDE SEQUENCE [LARGE SCALE GENOMIC DNA]</scope>
    <source>
        <strain>CT_02021853</strain>
    </source>
</reference>
<gene>
    <name evidence="1" type="primary">aaeA</name>
    <name type="ordered locus">SeD_A3725</name>
</gene>
<organism>
    <name type="scientific">Salmonella dublin (strain CT_02021853)</name>
    <dbReference type="NCBI Taxonomy" id="439851"/>
    <lineage>
        <taxon>Bacteria</taxon>
        <taxon>Pseudomonadati</taxon>
        <taxon>Pseudomonadota</taxon>
        <taxon>Gammaproteobacteria</taxon>
        <taxon>Enterobacterales</taxon>
        <taxon>Enterobacteriaceae</taxon>
        <taxon>Salmonella</taxon>
    </lineage>
</organism>
<evidence type="ECO:0000255" key="1">
    <source>
        <dbReference type="HAMAP-Rule" id="MF_01544"/>
    </source>
</evidence>